<organism>
    <name type="scientific">Roseiflexus sp. (strain RS-1)</name>
    <dbReference type="NCBI Taxonomy" id="357808"/>
    <lineage>
        <taxon>Bacteria</taxon>
        <taxon>Bacillati</taxon>
        <taxon>Chloroflexota</taxon>
        <taxon>Chloroflexia</taxon>
        <taxon>Chloroflexales</taxon>
        <taxon>Roseiflexineae</taxon>
        <taxon>Roseiflexaceae</taxon>
        <taxon>Roseiflexus</taxon>
    </lineage>
</organism>
<accession>A5URA7</accession>
<comment type="function">
    <text evidence="1">Catalyzes the condensation of pantoate with beta-alanine in an ATP-dependent reaction via a pantoyl-adenylate intermediate.</text>
</comment>
<comment type="catalytic activity">
    <reaction evidence="1">
        <text>(R)-pantoate + beta-alanine + ATP = (R)-pantothenate + AMP + diphosphate + H(+)</text>
        <dbReference type="Rhea" id="RHEA:10912"/>
        <dbReference type="ChEBI" id="CHEBI:15378"/>
        <dbReference type="ChEBI" id="CHEBI:15980"/>
        <dbReference type="ChEBI" id="CHEBI:29032"/>
        <dbReference type="ChEBI" id="CHEBI:30616"/>
        <dbReference type="ChEBI" id="CHEBI:33019"/>
        <dbReference type="ChEBI" id="CHEBI:57966"/>
        <dbReference type="ChEBI" id="CHEBI:456215"/>
        <dbReference type="EC" id="6.3.2.1"/>
    </reaction>
</comment>
<comment type="pathway">
    <text evidence="1">Cofactor biosynthesis; (R)-pantothenate biosynthesis; (R)-pantothenate from (R)-pantoate and beta-alanine: step 1/1.</text>
</comment>
<comment type="subunit">
    <text evidence="1">Homodimer.</text>
</comment>
<comment type="subcellular location">
    <subcellularLocation>
        <location evidence="1">Cytoplasm</location>
    </subcellularLocation>
</comment>
<comment type="miscellaneous">
    <text evidence="1">The reaction proceeds by a bi uni uni bi ping pong mechanism.</text>
</comment>
<comment type="similarity">
    <text evidence="1">Belongs to the pantothenate synthetase family.</text>
</comment>
<gene>
    <name evidence="1" type="primary">panC</name>
    <name type="ordered locus">RoseRS_0744</name>
</gene>
<sequence>MRVITTIAELRTARAALQGTTGLVPTMGYLHEGHLSLVRRARAENDHVITTIFVNPTQFGPSEDLTRYPRDLPRDLALLEAEKVDLVFAPDVSEMYPPGFGTFIDVGPIAAPLEGAARPGHFRGVATVVCKLFAITSPHRAYFGQKDAQQTLVIRRMTLDLNLPVEIVVCPIVREPDGLAMSSRNVYLNPEERRAATVLFRALRAVQERFAAGERNGDALRAAMRAVIDAEPLARADYVSVADLDDLHELETVTNRALASLAVRIGTTRLIDNCVLEA</sequence>
<proteinExistence type="inferred from homology"/>
<reference key="1">
    <citation type="submission" date="2007-04" db="EMBL/GenBank/DDBJ databases">
        <title>Complete sequence of Roseiflexus sp. RS-1.</title>
        <authorList>
            <consortium name="US DOE Joint Genome Institute"/>
            <person name="Copeland A."/>
            <person name="Lucas S."/>
            <person name="Lapidus A."/>
            <person name="Barry K."/>
            <person name="Detter J.C."/>
            <person name="Glavina del Rio T."/>
            <person name="Hammon N."/>
            <person name="Israni S."/>
            <person name="Dalin E."/>
            <person name="Tice H."/>
            <person name="Pitluck S."/>
            <person name="Chertkov O."/>
            <person name="Brettin T."/>
            <person name="Bruce D."/>
            <person name="Han C."/>
            <person name="Schmutz J."/>
            <person name="Larimer F."/>
            <person name="Land M."/>
            <person name="Hauser L."/>
            <person name="Kyrpides N."/>
            <person name="Mikhailova N."/>
            <person name="Bryant D.A."/>
            <person name="Richardson P."/>
        </authorList>
    </citation>
    <scope>NUCLEOTIDE SEQUENCE [LARGE SCALE GENOMIC DNA]</scope>
    <source>
        <strain>RS-1</strain>
    </source>
</reference>
<keyword id="KW-0067">ATP-binding</keyword>
<keyword id="KW-0963">Cytoplasm</keyword>
<keyword id="KW-0436">Ligase</keyword>
<keyword id="KW-0547">Nucleotide-binding</keyword>
<keyword id="KW-0566">Pantothenate biosynthesis</keyword>
<feature type="chain" id="PRO_1000076863" description="Pantothenate synthetase">
    <location>
        <begin position="1"/>
        <end position="278"/>
    </location>
</feature>
<feature type="active site" description="Proton donor" evidence="1">
    <location>
        <position position="34"/>
    </location>
</feature>
<feature type="binding site" evidence="1">
    <location>
        <begin position="27"/>
        <end position="34"/>
    </location>
    <ligand>
        <name>ATP</name>
        <dbReference type="ChEBI" id="CHEBI:30616"/>
    </ligand>
</feature>
<feature type="binding site" evidence="1">
    <location>
        <position position="58"/>
    </location>
    <ligand>
        <name>(R)-pantoate</name>
        <dbReference type="ChEBI" id="CHEBI:15980"/>
    </ligand>
</feature>
<feature type="binding site" evidence="1">
    <location>
        <position position="58"/>
    </location>
    <ligand>
        <name>beta-alanine</name>
        <dbReference type="ChEBI" id="CHEBI:57966"/>
    </ligand>
</feature>
<feature type="binding site" evidence="1">
    <location>
        <begin position="144"/>
        <end position="147"/>
    </location>
    <ligand>
        <name>ATP</name>
        <dbReference type="ChEBI" id="CHEBI:30616"/>
    </ligand>
</feature>
<feature type="binding site" evidence="1">
    <location>
        <position position="150"/>
    </location>
    <ligand>
        <name>(R)-pantoate</name>
        <dbReference type="ChEBI" id="CHEBI:15980"/>
    </ligand>
</feature>
<feature type="binding site" evidence="1">
    <location>
        <position position="173"/>
    </location>
    <ligand>
        <name>ATP</name>
        <dbReference type="ChEBI" id="CHEBI:30616"/>
    </ligand>
</feature>
<feature type="binding site" evidence="1">
    <location>
        <begin position="181"/>
        <end position="184"/>
    </location>
    <ligand>
        <name>ATP</name>
        <dbReference type="ChEBI" id="CHEBI:30616"/>
    </ligand>
</feature>
<protein>
    <recommendedName>
        <fullName evidence="1">Pantothenate synthetase</fullName>
        <shortName evidence="1">PS</shortName>
        <ecNumber evidence="1">6.3.2.1</ecNumber>
    </recommendedName>
    <alternativeName>
        <fullName evidence="1">Pantoate--beta-alanine ligase</fullName>
    </alternativeName>
    <alternativeName>
        <fullName evidence="1">Pantoate-activating enzyme</fullName>
    </alternativeName>
</protein>
<dbReference type="EC" id="6.3.2.1" evidence="1"/>
<dbReference type="EMBL" id="CP000686">
    <property type="protein sequence ID" value="ABQ89160.1"/>
    <property type="molecule type" value="Genomic_DNA"/>
</dbReference>
<dbReference type="RefSeq" id="WP_011955515.1">
    <property type="nucleotide sequence ID" value="NC_009523.1"/>
</dbReference>
<dbReference type="SMR" id="A5URA7"/>
<dbReference type="STRING" id="357808.RoseRS_0744"/>
<dbReference type="KEGG" id="rrs:RoseRS_0744"/>
<dbReference type="eggNOG" id="COG0414">
    <property type="taxonomic scope" value="Bacteria"/>
</dbReference>
<dbReference type="HOGENOM" id="CLU_047148_0_0_0"/>
<dbReference type="OrthoDB" id="9773087at2"/>
<dbReference type="UniPathway" id="UPA00028">
    <property type="reaction ID" value="UER00005"/>
</dbReference>
<dbReference type="Proteomes" id="UP000006554">
    <property type="component" value="Chromosome"/>
</dbReference>
<dbReference type="GO" id="GO:0005829">
    <property type="term" value="C:cytosol"/>
    <property type="evidence" value="ECO:0007669"/>
    <property type="project" value="TreeGrafter"/>
</dbReference>
<dbReference type="GO" id="GO:0005524">
    <property type="term" value="F:ATP binding"/>
    <property type="evidence" value="ECO:0007669"/>
    <property type="project" value="UniProtKB-KW"/>
</dbReference>
<dbReference type="GO" id="GO:0004592">
    <property type="term" value="F:pantoate-beta-alanine ligase activity"/>
    <property type="evidence" value="ECO:0007669"/>
    <property type="project" value="UniProtKB-UniRule"/>
</dbReference>
<dbReference type="GO" id="GO:0015940">
    <property type="term" value="P:pantothenate biosynthetic process"/>
    <property type="evidence" value="ECO:0007669"/>
    <property type="project" value="UniProtKB-UniRule"/>
</dbReference>
<dbReference type="CDD" id="cd00560">
    <property type="entry name" value="PanC"/>
    <property type="match status" value="1"/>
</dbReference>
<dbReference type="FunFam" id="3.30.1300.10:FF:000001">
    <property type="entry name" value="Pantothenate synthetase"/>
    <property type="match status" value="1"/>
</dbReference>
<dbReference type="FunFam" id="3.40.50.620:FF:000013">
    <property type="entry name" value="Pantothenate synthetase"/>
    <property type="match status" value="1"/>
</dbReference>
<dbReference type="Gene3D" id="3.40.50.620">
    <property type="entry name" value="HUPs"/>
    <property type="match status" value="1"/>
</dbReference>
<dbReference type="Gene3D" id="3.30.1300.10">
    <property type="entry name" value="Pantoate-beta-alanine ligase, C-terminal domain"/>
    <property type="match status" value="1"/>
</dbReference>
<dbReference type="HAMAP" id="MF_00158">
    <property type="entry name" value="PanC"/>
    <property type="match status" value="1"/>
</dbReference>
<dbReference type="InterPro" id="IPR004821">
    <property type="entry name" value="Cyt_trans-like"/>
</dbReference>
<dbReference type="InterPro" id="IPR003721">
    <property type="entry name" value="Pantoate_ligase"/>
</dbReference>
<dbReference type="InterPro" id="IPR042176">
    <property type="entry name" value="Pantoate_ligase_C"/>
</dbReference>
<dbReference type="InterPro" id="IPR014729">
    <property type="entry name" value="Rossmann-like_a/b/a_fold"/>
</dbReference>
<dbReference type="NCBIfam" id="TIGR00125">
    <property type="entry name" value="cyt_tran_rel"/>
    <property type="match status" value="1"/>
</dbReference>
<dbReference type="NCBIfam" id="TIGR00018">
    <property type="entry name" value="panC"/>
    <property type="match status" value="1"/>
</dbReference>
<dbReference type="PANTHER" id="PTHR21299">
    <property type="entry name" value="CYTIDYLATE KINASE/PANTOATE-BETA-ALANINE LIGASE"/>
    <property type="match status" value="1"/>
</dbReference>
<dbReference type="PANTHER" id="PTHR21299:SF1">
    <property type="entry name" value="PANTOATE--BETA-ALANINE LIGASE"/>
    <property type="match status" value="1"/>
</dbReference>
<dbReference type="Pfam" id="PF02569">
    <property type="entry name" value="Pantoate_ligase"/>
    <property type="match status" value="1"/>
</dbReference>
<dbReference type="SUPFAM" id="SSF52374">
    <property type="entry name" value="Nucleotidylyl transferase"/>
    <property type="match status" value="1"/>
</dbReference>
<evidence type="ECO:0000255" key="1">
    <source>
        <dbReference type="HAMAP-Rule" id="MF_00158"/>
    </source>
</evidence>
<name>PANC_ROSS1</name>